<proteinExistence type="inferred from homology"/>
<comment type="function">
    <text evidence="1">NDH shuttles electrons from NAD(P)H:plastoquinone, via FMN and iron-sulfur (Fe-S) centers, to quinones in the photosynthetic chain and possibly in a chloroplast respiratory chain. The immediate electron acceptor for the enzyme in this species is believed to be plastoquinone. Couples the redox reaction to proton translocation, and thus conserves the redox energy in a proton gradient.</text>
</comment>
<comment type="catalytic activity">
    <reaction evidence="1">
        <text>a plastoquinone + NADH + (n+1) H(+)(in) = a plastoquinol + NAD(+) + n H(+)(out)</text>
        <dbReference type="Rhea" id="RHEA:42608"/>
        <dbReference type="Rhea" id="RHEA-COMP:9561"/>
        <dbReference type="Rhea" id="RHEA-COMP:9562"/>
        <dbReference type="ChEBI" id="CHEBI:15378"/>
        <dbReference type="ChEBI" id="CHEBI:17757"/>
        <dbReference type="ChEBI" id="CHEBI:57540"/>
        <dbReference type="ChEBI" id="CHEBI:57945"/>
        <dbReference type="ChEBI" id="CHEBI:62192"/>
    </reaction>
</comment>
<comment type="catalytic activity">
    <reaction evidence="1">
        <text>a plastoquinone + NADPH + (n+1) H(+)(in) = a plastoquinol + NADP(+) + n H(+)(out)</text>
        <dbReference type="Rhea" id="RHEA:42612"/>
        <dbReference type="Rhea" id="RHEA-COMP:9561"/>
        <dbReference type="Rhea" id="RHEA-COMP:9562"/>
        <dbReference type="ChEBI" id="CHEBI:15378"/>
        <dbReference type="ChEBI" id="CHEBI:17757"/>
        <dbReference type="ChEBI" id="CHEBI:57783"/>
        <dbReference type="ChEBI" id="CHEBI:58349"/>
        <dbReference type="ChEBI" id="CHEBI:62192"/>
    </reaction>
</comment>
<comment type="cofactor">
    <cofactor evidence="1">
        <name>[4Fe-4S] cluster</name>
        <dbReference type="ChEBI" id="CHEBI:49883"/>
    </cofactor>
    <text evidence="1">Binds 2 [4Fe-4S] clusters per subunit.</text>
</comment>
<comment type="subunit">
    <text evidence="1">NDH is composed of at least 16 different subunits, 5 of which are encoded in the nucleus.</text>
</comment>
<comment type="subcellular location">
    <subcellularLocation>
        <location evidence="1">Plastid</location>
        <location evidence="1">Chloroplast thylakoid membrane</location>
        <topology evidence="1">Peripheral membrane protein</topology>
    </subcellularLocation>
</comment>
<comment type="similarity">
    <text evidence="1">Belongs to the complex I 23 kDa subunit family.</text>
</comment>
<evidence type="ECO:0000255" key="1">
    <source>
        <dbReference type="HAMAP-Rule" id="MF_01351"/>
    </source>
</evidence>
<gene>
    <name evidence="1" type="primary">ndhI</name>
</gene>
<keyword id="KW-0004">4Fe-4S</keyword>
<keyword id="KW-0150">Chloroplast</keyword>
<keyword id="KW-0408">Iron</keyword>
<keyword id="KW-0411">Iron-sulfur</keyword>
<keyword id="KW-0472">Membrane</keyword>
<keyword id="KW-0479">Metal-binding</keyword>
<keyword id="KW-0520">NAD</keyword>
<keyword id="KW-0521">NADP</keyword>
<keyword id="KW-0934">Plastid</keyword>
<keyword id="KW-0618">Plastoquinone</keyword>
<keyword id="KW-0874">Quinone</keyword>
<keyword id="KW-0677">Repeat</keyword>
<keyword id="KW-0793">Thylakoid</keyword>
<keyword id="KW-1278">Translocase</keyword>
<feature type="chain" id="PRO_0000250757" description="NAD(P)H-quinone oxidoreductase subunit I, chloroplastic">
    <location>
        <begin position="1"/>
        <end position="166"/>
    </location>
</feature>
<feature type="domain" description="4Fe-4S ferredoxin-type 1" evidence="1">
    <location>
        <begin position="55"/>
        <end position="84"/>
    </location>
</feature>
<feature type="domain" description="4Fe-4S ferredoxin-type 2" evidence="1">
    <location>
        <begin position="95"/>
        <end position="124"/>
    </location>
</feature>
<feature type="binding site" evidence="1">
    <location>
        <position position="64"/>
    </location>
    <ligand>
        <name>[4Fe-4S] cluster</name>
        <dbReference type="ChEBI" id="CHEBI:49883"/>
        <label>1</label>
    </ligand>
</feature>
<feature type="binding site" evidence="1">
    <location>
        <position position="67"/>
    </location>
    <ligand>
        <name>[4Fe-4S] cluster</name>
        <dbReference type="ChEBI" id="CHEBI:49883"/>
        <label>1</label>
    </ligand>
</feature>
<feature type="binding site" evidence="1">
    <location>
        <position position="70"/>
    </location>
    <ligand>
        <name>[4Fe-4S] cluster</name>
        <dbReference type="ChEBI" id="CHEBI:49883"/>
        <label>1</label>
    </ligand>
</feature>
<feature type="binding site" evidence="1">
    <location>
        <position position="74"/>
    </location>
    <ligand>
        <name>[4Fe-4S] cluster</name>
        <dbReference type="ChEBI" id="CHEBI:49883"/>
        <label>2</label>
    </ligand>
</feature>
<feature type="binding site" evidence="1">
    <location>
        <position position="104"/>
    </location>
    <ligand>
        <name>[4Fe-4S] cluster</name>
        <dbReference type="ChEBI" id="CHEBI:49883"/>
        <label>2</label>
    </ligand>
</feature>
<feature type="binding site" evidence="1">
    <location>
        <position position="107"/>
    </location>
    <ligand>
        <name>[4Fe-4S] cluster</name>
        <dbReference type="ChEBI" id="CHEBI:49883"/>
        <label>2</label>
    </ligand>
</feature>
<feature type="binding site" evidence="1">
    <location>
        <position position="110"/>
    </location>
    <ligand>
        <name>[4Fe-4S] cluster</name>
        <dbReference type="ChEBI" id="CHEBI:49883"/>
        <label>2</label>
    </ligand>
</feature>
<feature type="binding site" evidence="1">
    <location>
        <position position="114"/>
    </location>
    <ligand>
        <name>[4Fe-4S] cluster</name>
        <dbReference type="ChEBI" id="CHEBI:49883"/>
        <label>1</label>
    </ligand>
</feature>
<geneLocation type="chloroplast"/>
<dbReference type="EC" id="7.1.1.-" evidence="1"/>
<dbReference type="EMBL" id="AF383756">
    <property type="protein sequence ID" value="AAN61698.1"/>
    <property type="molecule type" value="Genomic_DNA"/>
</dbReference>
<dbReference type="SMR" id="Q8HVV6"/>
<dbReference type="GO" id="GO:0009535">
    <property type="term" value="C:chloroplast thylakoid membrane"/>
    <property type="evidence" value="ECO:0007669"/>
    <property type="project" value="UniProtKB-SubCell"/>
</dbReference>
<dbReference type="GO" id="GO:0051539">
    <property type="term" value="F:4 iron, 4 sulfur cluster binding"/>
    <property type="evidence" value="ECO:0007669"/>
    <property type="project" value="UniProtKB-KW"/>
</dbReference>
<dbReference type="GO" id="GO:0005506">
    <property type="term" value="F:iron ion binding"/>
    <property type="evidence" value="ECO:0007669"/>
    <property type="project" value="UniProtKB-UniRule"/>
</dbReference>
<dbReference type="GO" id="GO:0008137">
    <property type="term" value="F:NADH dehydrogenase (ubiquinone) activity"/>
    <property type="evidence" value="ECO:0007669"/>
    <property type="project" value="InterPro"/>
</dbReference>
<dbReference type="GO" id="GO:0048038">
    <property type="term" value="F:quinone binding"/>
    <property type="evidence" value="ECO:0007669"/>
    <property type="project" value="UniProtKB-KW"/>
</dbReference>
<dbReference type="GO" id="GO:0019684">
    <property type="term" value="P:photosynthesis, light reaction"/>
    <property type="evidence" value="ECO:0007669"/>
    <property type="project" value="UniProtKB-UniRule"/>
</dbReference>
<dbReference type="FunFam" id="3.30.70.3270:FF:000006">
    <property type="entry name" value="NAD(P)H-quinone oxidoreductase subunit I, chloroplastic"/>
    <property type="match status" value="1"/>
</dbReference>
<dbReference type="Gene3D" id="3.30.70.3270">
    <property type="match status" value="1"/>
</dbReference>
<dbReference type="HAMAP" id="MF_01351">
    <property type="entry name" value="NDH1_NuoI"/>
    <property type="match status" value="1"/>
</dbReference>
<dbReference type="InterPro" id="IPR017896">
    <property type="entry name" value="4Fe4S_Fe-S-bd"/>
</dbReference>
<dbReference type="InterPro" id="IPR017900">
    <property type="entry name" value="4Fe4S_Fe_S_CS"/>
</dbReference>
<dbReference type="InterPro" id="IPR010226">
    <property type="entry name" value="NADH_quinone_OxRdtase_chainI"/>
</dbReference>
<dbReference type="InterPro" id="IPR004497">
    <property type="entry name" value="NDHI"/>
</dbReference>
<dbReference type="NCBIfam" id="TIGR00403">
    <property type="entry name" value="ndhI"/>
    <property type="match status" value="1"/>
</dbReference>
<dbReference type="NCBIfam" id="TIGR01971">
    <property type="entry name" value="NuoI"/>
    <property type="match status" value="1"/>
</dbReference>
<dbReference type="NCBIfam" id="NF004537">
    <property type="entry name" value="PRK05888.1-3"/>
    <property type="match status" value="1"/>
</dbReference>
<dbReference type="PANTHER" id="PTHR47275">
    <property type="entry name" value="NAD(P)H-QUINONE OXIDOREDUCTASE SUBUNIT I, CHLOROPLASTIC"/>
    <property type="match status" value="1"/>
</dbReference>
<dbReference type="PANTHER" id="PTHR47275:SF1">
    <property type="entry name" value="NAD(P)H-QUINONE OXIDOREDUCTASE SUBUNIT I, CHLOROPLASTIC"/>
    <property type="match status" value="1"/>
</dbReference>
<dbReference type="Pfam" id="PF00037">
    <property type="entry name" value="Fer4"/>
    <property type="match status" value="2"/>
</dbReference>
<dbReference type="SUPFAM" id="SSF54862">
    <property type="entry name" value="4Fe-4S ferredoxins"/>
    <property type="match status" value="1"/>
</dbReference>
<dbReference type="PROSITE" id="PS00198">
    <property type="entry name" value="4FE4S_FER_1"/>
    <property type="match status" value="2"/>
</dbReference>
<dbReference type="PROSITE" id="PS51379">
    <property type="entry name" value="4FE4S_FER_2"/>
    <property type="match status" value="2"/>
</dbReference>
<sequence>MFPMVTEFMNYGQQTVRAARYIGQGFMITLSHANRLPVTIQYPYEKLITSERFRGRIHFEFDKCIACEVCVRVCPIDLPVVDWKLETDIRKKRLLNYSIDFGICIFCGNCVEYCPTNCLSMTEEYELSTYDRHELNYNQIALGRLPMSIIDDYTIRTILNLPEIKT</sequence>
<protein>
    <recommendedName>
        <fullName evidence="1">NAD(P)H-quinone oxidoreductase subunit I, chloroplastic</fullName>
        <ecNumber evidence="1">7.1.1.-</ecNumber>
    </recommendedName>
    <alternativeName>
        <fullName evidence="1">NAD(P)H dehydrogenase subunit I</fullName>
        <shortName evidence="1">NDH subunit I</shortName>
    </alternativeName>
    <alternativeName>
        <fullName evidence="1">NADH-plastoquinone oxidoreductase subunit I</fullName>
    </alternativeName>
</protein>
<accession>Q8HVV6</accession>
<organism>
    <name type="scientific">Arnica mollis</name>
    <name type="common">Hairy arnica</name>
    <dbReference type="NCBI Taxonomy" id="4247"/>
    <lineage>
        <taxon>Eukaryota</taxon>
        <taxon>Viridiplantae</taxon>
        <taxon>Streptophyta</taxon>
        <taxon>Embryophyta</taxon>
        <taxon>Tracheophyta</taxon>
        <taxon>Spermatophyta</taxon>
        <taxon>Magnoliopsida</taxon>
        <taxon>eudicotyledons</taxon>
        <taxon>Gunneridae</taxon>
        <taxon>Pentapetalae</taxon>
        <taxon>asterids</taxon>
        <taxon>campanulids</taxon>
        <taxon>Asterales</taxon>
        <taxon>Asteraceae</taxon>
        <taxon>Asteroideae</taxon>
        <taxon>Heliantheae alliance</taxon>
        <taxon>Madieae</taxon>
        <taxon>Arnicinae</taxon>
        <taxon>Arnica</taxon>
    </lineage>
</organism>
<name>NDHI_ARNMO</name>
<reference key="1">
    <citation type="submission" date="2003-01" db="EMBL/GenBank/DDBJ databases">
        <title>Chloroplast DNA phylogeny of tribe Heliantheae (Asteraceae).</title>
        <authorList>
            <person name="Panero J.L."/>
            <person name="Baldwin B.G."/>
            <person name="Schilling E.E."/>
            <person name="Clevinger J.A."/>
        </authorList>
    </citation>
    <scope>NUCLEOTIDE SEQUENCE [GENOMIC DNA]</scope>
</reference>